<comment type="function">
    <text evidence="1">Activates the cell division inhibited by chromosomal DNA over-replication.</text>
</comment>
<comment type="similarity">
    <text evidence="1">Belongs to the CedA family.</text>
</comment>
<dbReference type="EMBL" id="CP000247">
    <property type="protein sequence ID" value="ABG69680.1"/>
    <property type="molecule type" value="Genomic_DNA"/>
</dbReference>
<dbReference type="SMR" id="Q0TH99"/>
<dbReference type="KEGG" id="ecp:ECP_1677"/>
<dbReference type="HOGENOM" id="CLU_167445_0_0_6"/>
<dbReference type="Proteomes" id="UP000009182">
    <property type="component" value="Chromosome"/>
</dbReference>
<dbReference type="GO" id="GO:0003677">
    <property type="term" value="F:DNA binding"/>
    <property type="evidence" value="ECO:0007669"/>
    <property type="project" value="UniProtKB-UniRule"/>
</dbReference>
<dbReference type="GO" id="GO:0051301">
    <property type="term" value="P:cell division"/>
    <property type="evidence" value="ECO:0007669"/>
    <property type="project" value="UniProtKB-UniRule"/>
</dbReference>
<dbReference type="Gene3D" id="3.30.730.20">
    <property type="entry name" value="Cell division activator CedA"/>
    <property type="match status" value="1"/>
</dbReference>
<dbReference type="HAMAP" id="MF_01580">
    <property type="entry name" value="CedA"/>
    <property type="match status" value="1"/>
</dbReference>
<dbReference type="InterPro" id="IPR038463">
    <property type="entry name" value="CedA-like_sf"/>
</dbReference>
<dbReference type="InterPro" id="IPR019666">
    <property type="entry name" value="Cell_div_activator_CedA"/>
</dbReference>
<dbReference type="NCBIfam" id="NF007510">
    <property type="entry name" value="PRK10113.1"/>
    <property type="match status" value="1"/>
</dbReference>
<dbReference type="Pfam" id="PF10729">
    <property type="entry name" value="CedA"/>
    <property type="match status" value="1"/>
</dbReference>
<keyword id="KW-0131">Cell cycle</keyword>
<keyword id="KW-0132">Cell division</keyword>
<keyword id="KW-0238">DNA-binding</keyword>
<reference key="1">
    <citation type="journal article" date="2006" name="Mol. Microbiol.">
        <title>Role of pathogenicity island-associated integrases in the genome plasticity of uropathogenic Escherichia coli strain 536.</title>
        <authorList>
            <person name="Hochhut B."/>
            <person name="Wilde C."/>
            <person name="Balling G."/>
            <person name="Middendorf B."/>
            <person name="Dobrindt U."/>
            <person name="Brzuszkiewicz E."/>
            <person name="Gottschalk G."/>
            <person name="Carniel E."/>
            <person name="Hacker J."/>
        </authorList>
    </citation>
    <scope>NUCLEOTIDE SEQUENCE [LARGE SCALE GENOMIC DNA]</scope>
    <source>
        <strain>536 / UPEC</strain>
    </source>
</reference>
<proteinExistence type="inferred from homology"/>
<feature type="chain" id="PRO_0000300212" description="Cell division activator CedA">
    <location>
        <begin position="1"/>
        <end position="80"/>
    </location>
</feature>
<gene>
    <name evidence="1" type="primary">cedA</name>
    <name type="ordered locus">ECP_1677</name>
</gene>
<protein>
    <recommendedName>
        <fullName evidence="1">Cell division activator CedA</fullName>
    </recommendedName>
</protein>
<organism>
    <name type="scientific">Escherichia coli O6:K15:H31 (strain 536 / UPEC)</name>
    <dbReference type="NCBI Taxonomy" id="362663"/>
    <lineage>
        <taxon>Bacteria</taxon>
        <taxon>Pseudomonadati</taxon>
        <taxon>Pseudomonadota</taxon>
        <taxon>Gammaproteobacteria</taxon>
        <taxon>Enterobacterales</taxon>
        <taxon>Enterobacteriaceae</taxon>
        <taxon>Escherichia</taxon>
    </lineage>
</organism>
<name>CEDA_ECOL5</name>
<sequence>MKKPLRQQNRQIISYVPRTEPAPPEHAIKMDSFRDVWMLRGKYVAFVLMGESFLRSPAFTVPESAQRWANQIRQENEVEE</sequence>
<evidence type="ECO:0000255" key="1">
    <source>
        <dbReference type="HAMAP-Rule" id="MF_01580"/>
    </source>
</evidence>
<accession>Q0TH99</accession>